<protein>
    <recommendedName>
        <fullName evidence="5">U10-ctenitoxin-Pr1a</fullName>
        <shortName evidence="5">U10-CNTX-Pr1a</shortName>
    </recommendedName>
    <alternativeName>
        <fullName evidence="4">Non-toxic venom protein PRTx22C5</fullName>
    </alternativeName>
</protein>
<proteinExistence type="evidence at protein level"/>
<feature type="chain" id="PRO_0000087643" description="U10-ctenitoxin-Pr1a" evidence="2">
    <location>
        <begin position="1"/>
        <end position="34" status="greater than"/>
    </location>
</feature>
<feature type="disulfide bond" evidence="1">
    <location>
        <begin position="2"/>
        <end position="15"/>
    </location>
</feature>
<feature type="disulfide bond" evidence="1">
    <location>
        <begin position="9"/>
        <end position="20"/>
    </location>
</feature>
<feature type="disulfide bond" evidence="1">
    <location>
        <begin position="14"/>
        <end position="31"/>
    </location>
</feature>
<feature type="disulfide bond" evidence="1">
    <location>
        <begin position="22"/>
        <end position="29"/>
    </location>
</feature>
<feature type="non-terminal residue">
    <location>
        <position position="34"/>
    </location>
</feature>
<reference evidence="5" key="1">
    <citation type="journal article" date="2006" name="Comp. Biochem. Physiol.">
        <title>Comparison of the partial proteomes of the venoms of Brazilian spiders of the genus Phoneutria.</title>
        <authorList>
            <person name="Richardson M."/>
            <person name="Pimenta A.M."/>
            <person name="Bemquerer M.P."/>
            <person name="Santoro M.M."/>
            <person name="Beirao P.S."/>
            <person name="Lima M.E."/>
            <person name="Figueiredo S.G."/>
            <person name="Bloch C. Jr."/>
            <person name="Vasconcelos E.A."/>
            <person name="Campos F.A."/>
            <person name="Gomes P.C."/>
            <person name="Cordeiro M.N."/>
        </authorList>
    </citation>
    <scope>PROTEIN SEQUENCE</scope>
    <scope>SUBCELLULAR LOCATION</scope>
    <scope>MASS SPECTROMETRY</scope>
    <source>
        <tissue evidence="2">Venom</tissue>
    </source>
</reference>
<reference evidence="5" key="2">
    <citation type="submission" date="2009-11" db="UniProtKB">
        <authorList>
            <person name="Richardson M."/>
        </authorList>
    </citation>
    <scope>SEQUENCE REVISION TO 17</scope>
</reference>
<reference evidence="5" key="3">
    <citation type="submission" date="2004-06" db="UniProtKB">
        <title>Protein PRTx22C5 from venom of Brazilian Amazonian armed spider Phoneutria reidyi has sequence similarities with insecticidal toxins from other spiders.</title>
        <authorList>
            <person name="Richardson M."/>
            <person name="Pimenta A.M.C."/>
            <person name="Bemquerer M.P."/>
            <person name="Santoro M.M."/>
            <person name="Figueiredo S.G."/>
            <person name="Cordeiro M.N."/>
        </authorList>
    </citation>
    <scope>PROTEIN SEQUENCE</scope>
    <scope>FUNCTION</scope>
    <source>
        <tissue evidence="3">Venom</tissue>
    </source>
</reference>
<organism>
    <name type="scientific">Phoneutria reidyi</name>
    <name type="common">Brazilian Amazonian armed spider</name>
    <name type="synonym">Ctenus reidyi</name>
    <dbReference type="NCBI Taxonomy" id="272752"/>
    <lineage>
        <taxon>Eukaryota</taxon>
        <taxon>Metazoa</taxon>
        <taxon>Ecdysozoa</taxon>
        <taxon>Arthropoda</taxon>
        <taxon>Chelicerata</taxon>
        <taxon>Arachnida</taxon>
        <taxon>Araneae</taxon>
        <taxon>Araneomorphae</taxon>
        <taxon>Entelegynae</taxon>
        <taxon>Lycosoidea</taxon>
        <taxon>Ctenidae</taxon>
        <taxon>Phoneutria</taxon>
    </lineage>
</organism>
<comment type="function">
    <text evidence="3">Non-toxic to mice and insects.</text>
</comment>
<comment type="subcellular location">
    <subcellularLocation>
        <location evidence="2">Secreted</location>
    </subcellularLocation>
</comment>
<comment type="tissue specificity">
    <text evidence="6">Expressed by the venom gland.</text>
</comment>
<comment type="domain">
    <text evidence="1">The presence of a 'disulfide through disulfide knot' structurally defines this protein as a knottin.</text>
</comment>
<comment type="mass spectrometry"/>
<comment type="similarity">
    <text evidence="5">Belongs to the neurotoxin 02 (plectoxin) family.</text>
</comment>
<accession>P84000</accession>
<sequence>SCADAYKSCDSLKCCNNRTCMCSMIGTNCTCRKK</sequence>
<keyword id="KW-0903">Direct protein sequencing</keyword>
<keyword id="KW-1015">Disulfide bond</keyword>
<keyword id="KW-0960">Knottin</keyword>
<keyword id="KW-0964">Secreted</keyword>
<dbReference type="SMR" id="P84000"/>
<dbReference type="ArachnoServer" id="AS000298">
    <property type="toxin name" value="U10-ctenitoxin-Pr1a"/>
</dbReference>
<dbReference type="GO" id="GO:0005576">
    <property type="term" value="C:extracellular region"/>
    <property type="evidence" value="ECO:0007669"/>
    <property type="project" value="UniProtKB-SubCell"/>
</dbReference>
<dbReference type="GO" id="GO:0008200">
    <property type="term" value="F:ion channel inhibitor activity"/>
    <property type="evidence" value="ECO:0007669"/>
    <property type="project" value="InterPro"/>
</dbReference>
<dbReference type="CDD" id="cd12960">
    <property type="entry name" value="Spider_toxin"/>
    <property type="match status" value="1"/>
</dbReference>
<dbReference type="Gene3D" id="4.10.40.10">
    <property type="match status" value="1"/>
</dbReference>
<dbReference type="InterPro" id="IPR004169">
    <property type="entry name" value="Spidertoxin"/>
</dbReference>
<dbReference type="Pfam" id="PF02819">
    <property type="entry name" value="Toxin_9"/>
    <property type="match status" value="1"/>
</dbReference>
<dbReference type="SUPFAM" id="SSF57059">
    <property type="entry name" value="omega toxin-like"/>
    <property type="match status" value="1"/>
</dbReference>
<name>TX20B_PHORI</name>
<evidence type="ECO:0000250" key="1">
    <source>
        <dbReference type="UniProtKB" id="P30288"/>
    </source>
</evidence>
<evidence type="ECO:0000269" key="2">
    <source>
    </source>
</evidence>
<evidence type="ECO:0000269" key="3">
    <source ref="3"/>
</evidence>
<evidence type="ECO:0000303" key="4">
    <source>
    </source>
</evidence>
<evidence type="ECO:0000305" key="5"/>
<evidence type="ECO:0000305" key="6">
    <source>
    </source>
</evidence>